<organism>
    <name type="scientific">Bacillus thuringiensis subsp. konkukian (strain 97-27)</name>
    <dbReference type="NCBI Taxonomy" id="281309"/>
    <lineage>
        <taxon>Bacteria</taxon>
        <taxon>Bacillati</taxon>
        <taxon>Bacillota</taxon>
        <taxon>Bacilli</taxon>
        <taxon>Bacillales</taxon>
        <taxon>Bacillaceae</taxon>
        <taxon>Bacillus</taxon>
        <taxon>Bacillus cereus group</taxon>
    </lineage>
</organism>
<feature type="chain" id="PRO_0000171293" description="tRNA (guanine-N(7)-)-methyltransferase">
    <location>
        <begin position="1"/>
        <end position="217"/>
    </location>
</feature>
<feature type="active site" evidence="1">
    <location>
        <position position="118"/>
    </location>
</feature>
<feature type="binding site" evidence="2">
    <location>
        <position position="44"/>
    </location>
    <ligand>
        <name>S-adenosyl-L-methionine</name>
        <dbReference type="ChEBI" id="CHEBI:59789"/>
    </ligand>
</feature>
<feature type="binding site" evidence="2">
    <location>
        <position position="69"/>
    </location>
    <ligand>
        <name>S-adenosyl-L-methionine</name>
        <dbReference type="ChEBI" id="CHEBI:59789"/>
    </ligand>
</feature>
<feature type="binding site" evidence="2">
    <location>
        <position position="96"/>
    </location>
    <ligand>
        <name>S-adenosyl-L-methionine</name>
        <dbReference type="ChEBI" id="CHEBI:59789"/>
    </ligand>
</feature>
<feature type="binding site" evidence="2">
    <location>
        <position position="118"/>
    </location>
    <ligand>
        <name>S-adenosyl-L-methionine</name>
        <dbReference type="ChEBI" id="CHEBI:59789"/>
    </ligand>
</feature>
<feature type="binding site" evidence="2">
    <location>
        <position position="122"/>
    </location>
    <ligand>
        <name>substrate</name>
    </ligand>
</feature>
<feature type="binding site" evidence="2">
    <location>
        <position position="154"/>
    </location>
    <ligand>
        <name>substrate</name>
    </ligand>
</feature>
<feature type="binding site" evidence="2">
    <location>
        <begin position="191"/>
        <end position="194"/>
    </location>
    <ligand>
        <name>substrate</name>
    </ligand>
</feature>
<dbReference type="EC" id="2.1.1.33" evidence="2"/>
<dbReference type="EMBL" id="AE017355">
    <property type="protein sequence ID" value="AAT63673.1"/>
    <property type="molecule type" value="Genomic_DNA"/>
</dbReference>
<dbReference type="RefSeq" id="WP_001239380.1">
    <property type="nucleotide sequence ID" value="NC_005957.1"/>
</dbReference>
<dbReference type="RefSeq" id="YP_038745.1">
    <property type="nucleotide sequence ID" value="NC_005957.1"/>
</dbReference>
<dbReference type="SMR" id="Q6HCI1"/>
<dbReference type="GeneID" id="75087864"/>
<dbReference type="KEGG" id="btk:BT9727_4431"/>
<dbReference type="PATRIC" id="fig|281309.8.peg.4719"/>
<dbReference type="HOGENOM" id="CLU_050910_2_1_9"/>
<dbReference type="UniPathway" id="UPA00989"/>
<dbReference type="Proteomes" id="UP000001301">
    <property type="component" value="Chromosome"/>
</dbReference>
<dbReference type="GO" id="GO:0043527">
    <property type="term" value="C:tRNA methyltransferase complex"/>
    <property type="evidence" value="ECO:0007669"/>
    <property type="project" value="TreeGrafter"/>
</dbReference>
<dbReference type="GO" id="GO:0008176">
    <property type="term" value="F:tRNA (guanine(46)-N7)-methyltransferase activity"/>
    <property type="evidence" value="ECO:0007669"/>
    <property type="project" value="UniProtKB-UniRule"/>
</dbReference>
<dbReference type="CDD" id="cd02440">
    <property type="entry name" value="AdoMet_MTases"/>
    <property type="match status" value="1"/>
</dbReference>
<dbReference type="FunFam" id="3.40.50.150:FF:000035">
    <property type="entry name" value="tRNA (guanine-N(7)-)-methyltransferase"/>
    <property type="match status" value="1"/>
</dbReference>
<dbReference type="Gene3D" id="3.40.50.150">
    <property type="entry name" value="Vaccinia Virus protein VP39"/>
    <property type="match status" value="1"/>
</dbReference>
<dbReference type="HAMAP" id="MF_01057">
    <property type="entry name" value="tRNA_methyltr_TrmB"/>
    <property type="match status" value="1"/>
</dbReference>
<dbReference type="InterPro" id="IPR029063">
    <property type="entry name" value="SAM-dependent_MTases_sf"/>
</dbReference>
<dbReference type="InterPro" id="IPR003358">
    <property type="entry name" value="tRNA_(Gua-N-7)_MeTrfase_Trmb"/>
</dbReference>
<dbReference type="InterPro" id="IPR055361">
    <property type="entry name" value="tRNA_methyltr_TrmB_bact"/>
</dbReference>
<dbReference type="NCBIfam" id="NF001080">
    <property type="entry name" value="PRK00121.2-2"/>
    <property type="match status" value="1"/>
</dbReference>
<dbReference type="NCBIfam" id="TIGR00091">
    <property type="entry name" value="tRNA (guanosine(46)-N7)-methyltransferase TrmB"/>
    <property type="match status" value="1"/>
</dbReference>
<dbReference type="PANTHER" id="PTHR23417">
    <property type="entry name" value="3-DEOXY-D-MANNO-OCTULOSONIC-ACID TRANSFERASE/TRNA GUANINE-N 7 - -METHYLTRANSFERASE"/>
    <property type="match status" value="1"/>
</dbReference>
<dbReference type="PANTHER" id="PTHR23417:SF14">
    <property type="entry name" value="PENTACOTRIPEPTIDE-REPEAT REGION OF PRORP DOMAIN-CONTAINING PROTEIN"/>
    <property type="match status" value="1"/>
</dbReference>
<dbReference type="Pfam" id="PF02390">
    <property type="entry name" value="Methyltransf_4"/>
    <property type="match status" value="1"/>
</dbReference>
<dbReference type="SUPFAM" id="SSF53335">
    <property type="entry name" value="S-adenosyl-L-methionine-dependent methyltransferases"/>
    <property type="match status" value="1"/>
</dbReference>
<dbReference type="PROSITE" id="PS51625">
    <property type="entry name" value="SAM_MT_TRMB"/>
    <property type="match status" value="1"/>
</dbReference>
<sequence>MRLRHKPYAMDRINEYSHIVIGNPEERAGNWKEVFGNEQPIHIEVGTGRGRFMYDMAKANPHINYIGIEKFTSVVVDALDKLIEEELPNLKLINKDAEDLTVFFAKGEIDRVYLNFSDPWPKKRHTKRRLTYKTFLRNYEEVLVEGGEIHFKTDNQGLFEYSLMSMAEYGMLLTYLSLDLHNSDFEGNIMTEYEEKFSSKGHRIYRVEAKYRTEPMQ</sequence>
<keyword id="KW-0489">Methyltransferase</keyword>
<keyword id="KW-0949">S-adenosyl-L-methionine</keyword>
<keyword id="KW-0808">Transferase</keyword>
<keyword id="KW-0819">tRNA processing</keyword>
<gene>
    <name evidence="2" type="primary">trmB</name>
    <name type="ordered locus">BT9727_4431</name>
</gene>
<protein>
    <recommendedName>
        <fullName evidence="2">tRNA (guanine-N(7)-)-methyltransferase</fullName>
        <ecNumber evidence="2">2.1.1.33</ecNumber>
    </recommendedName>
    <alternativeName>
        <fullName evidence="2">tRNA (guanine(46)-N(7))-methyltransferase</fullName>
    </alternativeName>
    <alternativeName>
        <fullName evidence="2">tRNA(m7G46)-methyltransferase</fullName>
    </alternativeName>
</protein>
<accession>Q6HCI1</accession>
<comment type="function">
    <text evidence="2">Catalyzes the formation of N(7)-methylguanine at position 46 (m7G46) in tRNA.</text>
</comment>
<comment type="catalytic activity">
    <reaction evidence="2">
        <text>guanosine(46) in tRNA + S-adenosyl-L-methionine = N(7)-methylguanosine(46) in tRNA + S-adenosyl-L-homocysteine</text>
        <dbReference type="Rhea" id="RHEA:42708"/>
        <dbReference type="Rhea" id="RHEA-COMP:10188"/>
        <dbReference type="Rhea" id="RHEA-COMP:10189"/>
        <dbReference type="ChEBI" id="CHEBI:57856"/>
        <dbReference type="ChEBI" id="CHEBI:59789"/>
        <dbReference type="ChEBI" id="CHEBI:74269"/>
        <dbReference type="ChEBI" id="CHEBI:74480"/>
        <dbReference type="EC" id="2.1.1.33"/>
    </reaction>
</comment>
<comment type="pathway">
    <text evidence="2">tRNA modification; N(7)-methylguanine-tRNA biosynthesis.</text>
</comment>
<comment type="similarity">
    <text evidence="2">Belongs to the class I-like SAM-binding methyltransferase superfamily. TrmB family.</text>
</comment>
<evidence type="ECO:0000250" key="1"/>
<evidence type="ECO:0000255" key="2">
    <source>
        <dbReference type="HAMAP-Rule" id="MF_01057"/>
    </source>
</evidence>
<name>TRMB_BACHK</name>
<reference key="1">
    <citation type="journal article" date="2006" name="J. Bacteriol.">
        <title>Pathogenomic sequence analysis of Bacillus cereus and Bacillus thuringiensis isolates closely related to Bacillus anthracis.</title>
        <authorList>
            <person name="Han C.S."/>
            <person name="Xie G."/>
            <person name="Challacombe J.F."/>
            <person name="Altherr M.R."/>
            <person name="Bhotika S.S."/>
            <person name="Bruce D."/>
            <person name="Campbell C.S."/>
            <person name="Campbell M.L."/>
            <person name="Chen J."/>
            <person name="Chertkov O."/>
            <person name="Cleland C."/>
            <person name="Dimitrijevic M."/>
            <person name="Doggett N.A."/>
            <person name="Fawcett J.J."/>
            <person name="Glavina T."/>
            <person name="Goodwin L.A."/>
            <person name="Hill K.K."/>
            <person name="Hitchcock P."/>
            <person name="Jackson P.J."/>
            <person name="Keim P."/>
            <person name="Kewalramani A.R."/>
            <person name="Longmire J."/>
            <person name="Lucas S."/>
            <person name="Malfatti S."/>
            <person name="McMurry K."/>
            <person name="Meincke L.J."/>
            <person name="Misra M."/>
            <person name="Moseman B.L."/>
            <person name="Mundt M."/>
            <person name="Munk A.C."/>
            <person name="Okinaka R.T."/>
            <person name="Parson-Quintana B."/>
            <person name="Reilly L.P."/>
            <person name="Richardson P."/>
            <person name="Robinson D.L."/>
            <person name="Rubin E."/>
            <person name="Saunders E."/>
            <person name="Tapia R."/>
            <person name="Tesmer J.G."/>
            <person name="Thayer N."/>
            <person name="Thompson L.S."/>
            <person name="Tice H."/>
            <person name="Ticknor L.O."/>
            <person name="Wills P.L."/>
            <person name="Brettin T.S."/>
            <person name="Gilna P."/>
        </authorList>
    </citation>
    <scope>NUCLEOTIDE SEQUENCE [LARGE SCALE GENOMIC DNA]</scope>
    <source>
        <strain>97-27</strain>
    </source>
</reference>
<proteinExistence type="inferred from homology"/>